<accession>Q330C3</accession>
<organism>
    <name type="scientific">Nyctophilus arnhemensis</name>
    <name type="common">Northern long-eared bat</name>
    <dbReference type="NCBI Taxonomy" id="270777"/>
    <lineage>
        <taxon>Eukaryota</taxon>
        <taxon>Metazoa</taxon>
        <taxon>Chordata</taxon>
        <taxon>Craniata</taxon>
        <taxon>Vertebrata</taxon>
        <taxon>Euteleostomi</taxon>
        <taxon>Mammalia</taxon>
        <taxon>Eutheria</taxon>
        <taxon>Laurasiatheria</taxon>
        <taxon>Chiroptera</taxon>
        <taxon>Yangochiroptera</taxon>
        <taxon>Vespertilionidae</taxon>
        <taxon>Nyctophilus</taxon>
    </lineage>
</organism>
<comment type="function">
    <text evidence="1">Core subunit of the mitochondrial membrane respiratory chain NADH dehydrogenase (Complex I) which catalyzes electron transfer from NADH through the respiratory chain, using ubiquinone as an electron acceptor. Essential for the catalytic activity and assembly of complex I.</text>
</comment>
<comment type="catalytic activity">
    <reaction evidence="1">
        <text>a ubiquinone + NADH + 5 H(+)(in) = a ubiquinol + NAD(+) + 4 H(+)(out)</text>
        <dbReference type="Rhea" id="RHEA:29091"/>
        <dbReference type="Rhea" id="RHEA-COMP:9565"/>
        <dbReference type="Rhea" id="RHEA-COMP:9566"/>
        <dbReference type="ChEBI" id="CHEBI:15378"/>
        <dbReference type="ChEBI" id="CHEBI:16389"/>
        <dbReference type="ChEBI" id="CHEBI:17976"/>
        <dbReference type="ChEBI" id="CHEBI:57540"/>
        <dbReference type="ChEBI" id="CHEBI:57945"/>
        <dbReference type="EC" id="7.1.1.2"/>
    </reaction>
</comment>
<comment type="subunit">
    <text evidence="1 2">Core subunit of respiratory chain NADH dehydrogenase (Complex I) which is composed of 45 different subunits. Interacts with TMEM242 (By similarity).</text>
</comment>
<comment type="subcellular location">
    <subcellularLocation>
        <location evidence="2">Mitochondrion inner membrane</location>
        <topology evidence="3">Multi-pass membrane protein</topology>
    </subcellularLocation>
</comment>
<comment type="similarity">
    <text evidence="4">Belongs to the complex I subunit 2 family.</text>
</comment>
<name>NU2M_NYCAR</name>
<dbReference type="EC" id="7.1.1.2" evidence="1"/>
<dbReference type="EMBL" id="AY504569">
    <property type="protein sequence ID" value="AAS91434.1"/>
    <property type="molecule type" value="Genomic_DNA"/>
</dbReference>
<dbReference type="SMR" id="Q330C3"/>
<dbReference type="GO" id="GO:0005743">
    <property type="term" value="C:mitochondrial inner membrane"/>
    <property type="evidence" value="ECO:0000250"/>
    <property type="project" value="UniProtKB"/>
</dbReference>
<dbReference type="GO" id="GO:0008137">
    <property type="term" value="F:NADH dehydrogenase (ubiquinone) activity"/>
    <property type="evidence" value="ECO:0000250"/>
    <property type="project" value="UniProtKB"/>
</dbReference>
<dbReference type="GO" id="GO:0006120">
    <property type="term" value="P:mitochondrial electron transport, NADH to ubiquinone"/>
    <property type="evidence" value="ECO:0000250"/>
    <property type="project" value="UniProtKB"/>
</dbReference>
<dbReference type="GO" id="GO:0032981">
    <property type="term" value="P:mitochondrial respiratory chain complex I assembly"/>
    <property type="evidence" value="ECO:0000250"/>
    <property type="project" value="UniProtKB"/>
</dbReference>
<dbReference type="InterPro" id="IPR050175">
    <property type="entry name" value="Complex_I_Subunit_2"/>
</dbReference>
<dbReference type="InterPro" id="IPR010933">
    <property type="entry name" value="NADH_DH_su2_C"/>
</dbReference>
<dbReference type="InterPro" id="IPR003917">
    <property type="entry name" value="NADH_UbQ_OxRdtase_chain2"/>
</dbReference>
<dbReference type="InterPro" id="IPR001750">
    <property type="entry name" value="ND/Mrp_TM"/>
</dbReference>
<dbReference type="PANTHER" id="PTHR46552">
    <property type="entry name" value="NADH-UBIQUINONE OXIDOREDUCTASE CHAIN 2"/>
    <property type="match status" value="1"/>
</dbReference>
<dbReference type="PANTHER" id="PTHR46552:SF1">
    <property type="entry name" value="NADH-UBIQUINONE OXIDOREDUCTASE CHAIN 2"/>
    <property type="match status" value="1"/>
</dbReference>
<dbReference type="Pfam" id="PF06444">
    <property type="entry name" value="NADH_dehy_S2_C"/>
    <property type="match status" value="1"/>
</dbReference>
<dbReference type="Pfam" id="PF00361">
    <property type="entry name" value="Proton_antipo_M"/>
    <property type="match status" value="1"/>
</dbReference>
<dbReference type="PRINTS" id="PR01436">
    <property type="entry name" value="NADHDHGNASE2"/>
</dbReference>
<reference key="1">
    <citation type="submission" date="2003-12" db="EMBL/GenBank/DDBJ databases">
        <title>Bats and birds: flying in the face of mtDNA evolutionary rates.</title>
        <authorList>
            <person name="Worthington Wilmer J.M."/>
            <person name="Schneider C.J."/>
            <person name="Sorenson M.D."/>
        </authorList>
    </citation>
    <scope>NUCLEOTIDE SEQUENCE [GENOMIC DNA]</scope>
    <source>
        <strain>Isolate CR1</strain>
    </source>
</reference>
<feature type="chain" id="PRO_0000245331" description="NADH-ubiquinone oxidoreductase chain 2">
    <location>
        <begin position="1"/>
        <end position="347"/>
    </location>
</feature>
<feature type="transmembrane region" description="Helical" evidence="3">
    <location>
        <begin position="3"/>
        <end position="23"/>
    </location>
</feature>
<feature type="transmembrane region" description="Helical" evidence="3">
    <location>
        <begin position="59"/>
        <end position="79"/>
    </location>
</feature>
<feature type="transmembrane region" description="Helical" evidence="3">
    <location>
        <begin position="89"/>
        <end position="109"/>
    </location>
</feature>
<feature type="transmembrane region" description="Helical" evidence="3">
    <location>
        <begin position="150"/>
        <end position="170"/>
    </location>
</feature>
<feature type="transmembrane region" description="Helical" evidence="3">
    <location>
        <begin position="178"/>
        <end position="198"/>
    </location>
</feature>
<feature type="transmembrane region" description="Helical" evidence="3">
    <location>
        <begin position="201"/>
        <end position="221"/>
    </location>
</feature>
<feature type="transmembrane region" description="Helical" evidence="3">
    <location>
        <begin position="237"/>
        <end position="257"/>
    </location>
</feature>
<feature type="transmembrane region" description="Helical" evidence="3">
    <location>
        <begin position="276"/>
        <end position="296"/>
    </location>
</feature>
<feature type="transmembrane region" description="Helical" evidence="3">
    <location>
        <begin position="326"/>
        <end position="346"/>
    </location>
</feature>
<protein>
    <recommendedName>
        <fullName evidence="1">NADH-ubiquinone oxidoreductase chain 2</fullName>
        <ecNumber evidence="1">7.1.1.2</ecNumber>
    </recommendedName>
    <alternativeName>
        <fullName>NADH dehydrogenase subunit 2</fullName>
    </alternativeName>
</protein>
<proteinExistence type="inferred from homology"/>
<geneLocation type="mitochondrion"/>
<evidence type="ECO:0000250" key="1">
    <source>
        <dbReference type="UniProtKB" id="P03891"/>
    </source>
</evidence>
<evidence type="ECO:0000250" key="2">
    <source>
        <dbReference type="UniProtKB" id="P03892"/>
    </source>
</evidence>
<evidence type="ECO:0000255" key="3"/>
<evidence type="ECO:0000305" key="4"/>
<sequence length="347" mass="39215">MNPMTFSLIMMTMVSGTFLVMMSSHWFLIWVGFEMNMLAIIPLLTKQHNPRSTEAATKYFLTQATASMLLMMAAIINLLYSGHWSVQKLINPMASVTMTMALAMKLGLAPFHFWVPEVTQGIPLSSGLILLTWQKLAPLSIMYMISPLTNLNILMIMALLSIAIGGWGGLNQTQLRKIMAYSSIAHMGWMMSVLMYNPNMMLLNLYLYIPMTITTFSLLMINSTTTTTSLSYTWNKLPLITMIILITMLSLGGLPPLTGFLPKWLIIQELVKNNNIILSTVMALLALLNLYFYTRITYTTSLTLFPTMNNTKITWQFKYPKQMLYLPLMIIISTLILPVSPMTAILE</sequence>
<keyword id="KW-0249">Electron transport</keyword>
<keyword id="KW-0472">Membrane</keyword>
<keyword id="KW-0496">Mitochondrion</keyword>
<keyword id="KW-0999">Mitochondrion inner membrane</keyword>
<keyword id="KW-0520">NAD</keyword>
<keyword id="KW-0679">Respiratory chain</keyword>
<keyword id="KW-1278">Translocase</keyword>
<keyword id="KW-0812">Transmembrane</keyword>
<keyword id="KW-1133">Transmembrane helix</keyword>
<keyword id="KW-0813">Transport</keyword>
<keyword id="KW-0830">Ubiquinone</keyword>
<gene>
    <name evidence="1" type="primary">MT-ND2</name>
    <name type="synonym">MTND2</name>
    <name type="synonym">NADH2</name>
    <name type="synonym">ND2</name>
</gene>